<protein>
    <recommendedName>
        <fullName>RILP-like protein 1</fullName>
    </recommendedName>
    <alternativeName>
        <fullName>Rab-interacting lysosomal-like protein 1</fullName>
    </alternativeName>
</protein>
<name>RIPL1_XENTR</name>
<organism>
    <name type="scientific">Xenopus tropicalis</name>
    <name type="common">Western clawed frog</name>
    <name type="synonym">Silurana tropicalis</name>
    <dbReference type="NCBI Taxonomy" id="8364"/>
    <lineage>
        <taxon>Eukaryota</taxon>
        <taxon>Metazoa</taxon>
        <taxon>Chordata</taxon>
        <taxon>Craniata</taxon>
        <taxon>Vertebrata</taxon>
        <taxon>Euteleostomi</taxon>
        <taxon>Amphibia</taxon>
        <taxon>Batrachia</taxon>
        <taxon>Anura</taxon>
        <taxon>Pipoidea</taxon>
        <taxon>Pipidae</taxon>
        <taxon>Xenopodinae</taxon>
        <taxon>Xenopus</taxon>
        <taxon>Silurana</taxon>
    </lineage>
</organism>
<feature type="chain" id="PRO_0000299314" description="RILP-like protein 1">
    <location>
        <begin position="1"/>
        <end position="394"/>
    </location>
</feature>
<feature type="domain" description="RH1" evidence="3">
    <location>
        <begin position="2"/>
        <end position="89"/>
    </location>
</feature>
<feature type="domain" description="RH2" evidence="4">
    <location>
        <begin position="282"/>
        <end position="347"/>
    </location>
</feature>
<feature type="region of interest" description="Disordered" evidence="5">
    <location>
        <begin position="318"/>
        <end position="337"/>
    </location>
</feature>
<feature type="coiled-coil region" evidence="2">
    <location>
        <begin position="68"/>
        <end position="312"/>
    </location>
</feature>
<proteinExistence type="evidence at transcript level"/>
<reference key="1">
    <citation type="submission" date="2006-11" db="EMBL/GenBank/DDBJ databases">
        <authorList>
            <consortium name="NIH - Xenopus Gene Collection (XGC) project"/>
        </authorList>
    </citation>
    <scope>NUCLEOTIDE SEQUENCE [LARGE SCALE MRNA]</scope>
    <source>
        <tissue>Testis</tissue>
    </source>
</reference>
<gene>
    <name type="primary">rilpl1</name>
</gene>
<evidence type="ECO:0000250" key="1"/>
<evidence type="ECO:0000255" key="2"/>
<evidence type="ECO:0000255" key="3">
    <source>
        <dbReference type="PROSITE-ProRule" id="PRU01112"/>
    </source>
</evidence>
<evidence type="ECO:0000255" key="4">
    <source>
        <dbReference type="PROSITE-ProRule" id="PRU01113"/>
    </source>
</evidence>
<evidence type="ECO:0000256" key="5">
    <source>
        <dbReference type="SAM" id="MobiDB-lite"/>
    </source>
</evidence>
<evidence type="ECO:0000305" key="6"/>
<accession>A0PJP4</accession>
<comment type="function">
    <text evidence="1">Plays a role in the regulation of cell shape and polarity. Plays a role in cellular protein transport, including protein transport away from primary cilia. Neuroprotective protein (By similarity).</text>
</comment>
<comment type="subcellular location">
    <subcellularLocation>
        <location evidence="1">Cytoplasm</location>
        <location evidence="1">Cytosol</location>
    </subcellularLocation>
    <subcellularLocation>
        <location evidence="1">Cytoplasm</location>
        <location evidence="1">Cytoskeleton</location>
        <location evidence="1">Microtubule organizing center</location>
        <location evidence="1">Centrosome</location>
    </subcellularLocation>
    <subcellularLocation>
        <location evidence="1">Cell projection</location>
        <location evidence="1">Cilium</location>
    </subcellularLocation>
</comment>
<comment type="similarity">
    <text evidence="6">Belongs to the RILPL family.</text>
</comment>
<sequence length="394" mass="46461">MEGISALEKNVAELTVMDVYDIASAVGQEFERVIDQYGCEVIGRLMPKVVRVLEILEVLVSRNHINPEMEELRLELDRLRLERMDRIEKEKKHQKELELVEDVWRGEAQDLLNQIAQLQEENKQLVSNLSQKDINLTEEEFQKHEGMSERERQVMKKLKEVVDKQRDEIRAKDRELVLKNEDVEALQQQQSRLMKINHDLRHRVTVVEAQGKALIEQKVELEAYLQTKEQEAASMRLEIGKLRDKLKGEQHTNGEEIKTETLNEESILETEKLSLDLKDSNRPRFTLQELRDVLHERNELKAKVFMLQEELAYYKSEEADEEHKLPQSSPVIDSKAPIPQESGIKRLFSFFSRDKKRMPMMQKNVHFQESFGQWTEYNRDDVYTEQGQEALQHM</sequence>
<keyword id="KW-0966">Cell projection</keyword>
<keyword id="KW-0969">Cilium</keyword>
<keyword id="KW-0175">Coiled coil</keyword>
<keyword id="KW-0963">Cytoplasm</keyword>
<keyword id="KW-0206">Cytoskeleton</keyword>
<keyword id="KW-0653">Protein transport</keyword>
<keyword id="KW-1185">Reference proteome</keyword>
<keyword id="KW-0813">Transport</keyword>
<dbReference type="EMBL" id="BC127552">
    <property type="protein sequence ID" value="AAI27553.1"/>
    <property type="molecule type" value="mRNA"/>
</dbReference>
<dbReference type="EMBL" id="BC135712">
    <property type="protein sequence ID" value="AAI35713.1"/>
    <property type="molecule type" value="mRNA"/>
</dbReference>
<dbReference type="RefSeq" id="NP_001096320.1">
    <property type="nucleotide sequence ID" value="NM_001102850.1"/>
</dbReference>
<dbReference type="SMR" id="A0PJP4"/>
<dbReference type="FunCoup" id="A0PJP4">
    <property type="interactions" value="757"/>
</dbReference>
<dbReference type="STRING" id="8364.ENSXETP00000025751"/>
<dbReference type="PaxDb" id="8364-ENSXETP00000060379"/>
<dbReference type="DNASU" id="100124903"/>
<dbReference type="GeneID" id="100124903"/>
<dbReference type="KEGG" id="xtr:100124903"/>
<dbReference type="AGR" id="Xenbase:XB-GENE-952710"/>
<dbReference type="CTD" id="353116"/>
<dbReference type="Xenbase" id="XB-GENE-952710">
    <property type="gene designation" value="rilpl1"/>
</dbReference>
<dbReference type="eggNOG" id="ENOG502QR9G">
    <property type="taxonomic scope" value="Eukaryota"/>
</dbReference>
<dbReference type="HOGENOM" id="CLU_044133_3_0_1"/>
<dbReference type="InParanoid" id="A0PJP4"/>
<dbReference type="OMA" id="SFGQWAD"/>
<dbReference type="OrthoDB" id="10069524at2759"/>
<dbReference type="Proteomes" id="UP000008143">
    <property type="component" value="Chromosome 1"/>
</dbReference>
<dbReference type="Bgee" id="ENSXETG00000032256">
    <property type="expression patterns" value="Expressed in skeletal muscle tissue and 15 other cell types or tissues"/>
</dbReference>
<dbReference type="GO" id="GO:0005813">
    <property type="term" value="C:centrosome"/>
    <property type="evidence" value="ECO:0000250"/>
    <property type="project" value="UniProtKB"/>
</dbReference>
<dbReference type="GO" id="GO:0005929">
    <property type="term" value="C:cilium"/>
    <property type="evidence" value="ECO:0000250"/>
    <property type="project" value="UniProtKB"/>
</dbReference>
<dbReference type="GO" id="GO:0005829">
    <property type="term" value="C:cytosol"/>
    <property type="evidence" value="ECO:0000250"/>
    <property type="project" value="UniProtKB"/>
</dbReference>
<dbReference type="GO" id="GO:0016020">
    <property type="term" value="C:membrane"/>
    <property type="evidence" value="ECO:0007669"/>
    <property type="project" value="GOC"/>
</dbReference>
<dbReference type="GO" id="GO:0046983">
    <property type="term" value="F:protein dimerization activity"/>
    <property type="evidence" value="ECO:0007669"/>
    <property type="project" value="InterPro"/>
</dbReference>
<dbReference type="GO" id="GO:0003382">
    <property type="term" value="P:epithelial cell morphogenesis"/>
    <property type="evidence" value="ECO:0000250"/>
    <property type="project" value="UniProtKB"/>
</dbReference>
<dbReference type="GO" id="GO:0007263">
    <property type="term" value="P:nitric oxide mediated signal transduction"/>
    <property type="evidence" value="ECO:0000250"/>
    <property type="project" value="UniProtKB"/>
</dbReference>
<dbReference type="GO" id="GO:1903445">
    <property type="term" value="P:protein transport from ciliary membrane to plasma membrane"/>
    <property type="evidence" value="ECO:0000250"/>
    <property type="project" value="UniProtKB"/>
</dbReference>
<dbReference type="CDD" id="cd14445">
    <property type="entry name" value="RILP-like"/>
    <property type="match status" value="1"/>
</dbReference>
<dbReference type="FunFam" id="1.20.58.1770:FF:000002">
    <property type="entry name" value="RILP-like protein 1 isoform X1"/>
    <property type="match status" value="1"/>
</dbReference>
<dbReference type="Gene3D" id="1.20.58.1770">
    <property type="match status" value="1"/>
</dbReference>
<dbReference type="Gene3D" id="6.10.230.10">
    <property type="match status" value="1"/>
</dbReference>
<dbReference type="InterPro" id="IPR051241">
    <property type="entry name" value="DZIP_RILPL"/>
</dbReference>
<dbReference type="InterPro" id="IPR034743">
    <property type="entry name" value="RH1"/>
</dbReference>
<dbReference type="InterPro" id="IPR034744">
    <property type="entry name" value="RH2"/>
</dbReference>
<dbReference type="InterPro" id="IPR021563">
    <property type="entry name" value="RILP_dimer"/>
</dbReference>
<dbReference type="PANTHER" id="PTHR21502:SF6">
    <property type="entry name" value="RILP-LIKE PROTEIN 1"/>
    <property type="match status" value="1"/>
</dbReference>
<dbReference type="PANTHER" id="PTHR21502">
    <property type="entry name" value="ZINC FINGER PROTEIN DZIP1"/>
    <property type="match status" value="1"/>
</dbReference>
<dbReference type="Pfam" id="PF09744">
    <property type="entry name" value="RH1"/>
    <property type="match status" value="1"/>
</dbReference>
<dbReference type="Pfam" id="PF11461">
    <property type="entry name" value="RILP"/>
    <property type="match status" value="1"/>
</dbReference>
<dbReference type="SUPFAM" id="SSF161256">
    <property type="entry name" value="RILP dimerisation region"/>
    <property type="match status" value="1"/>
</dbReference>
<dbReference type="PROSITE" id="PS51776">
    <property type="entry name" value="RH1"/>
    <property type="match status" value="1"/>
</dbReference>
<dbReference type="PROSITE" id="PS51777">
    <property type="entry name" value="RH2"/>
    <property type="match status" value="1"/>
</dbReference>